<comment type="function">
    <text evidence="1">Catalyzes the GTP-dependent ribosomal translocation step during translation elongation. During this step, the ribosome changes from the pre-translocational (PRE) to the post-translocational (POST) state as the newly formed A-site-bound peptidyl-tRNA and P-site-bound deacylated tRNA move to the P and E sites, respectively. Catalyzes the coordinated movement of the two tRNA molecules, the mRNA and conformational changes in the ribosome.</text>
</comment>
<comment type="subcellular location">
    <subcellularLocation>
        <location evidence="1">Cytoplasm</location>
    </subcellularLocation>
</comment>
<comment type="similarity">
    <text evidence="1">Belongs to the TRAFAC class translation factor GTPase superfamily. Classic translation factor GTPase family. EF-G/EF-2 subfamily.</text>
</comment>
<gene>
    <name evidence="1" type="primary">fusA</name>
    <name type="ordered locus">THA_1212</name>
</gene>
<feature type="chain" id="PRO_1000201494" description="Elongation factor G">
    <location>
        <begin position="1"/>
        <end position="691"/>
    </location>
</feature>
<feature type="domain" description="tr-type G">
    <location>
        <begin position="12"/>
        <end position="286"/>
    </location>
</feature>
<feature type="binding site" evidence="1">
    <location>
        <begin position="21"/>
        <end position="28"/>
    </location>
    <ligand>
        <name>GTP</name>
        <dbReference type="ChEBI" id="CHEBI:37565"/>
    </ligand>
</feature>
<feature type="binding site" evidence="1">
    <location>
        <begin position="85"/>
        <end position="89"/>
    </location>
    <ligand>
        <name>GTP</name>
        <dbReference type="ChEBI" id="CHEBI:37565"/>
    </ligand>
</feature>
<feature type="binding site" evidence="1">
    <location>
        <begin position="139"/>
        <end position="142"/>
    </location>
    <ligand>
        <name>GTP</name>
        <dbReference type="ChEBI" id="CHEBI:37565"/>
    </ligand>
</feature>
<proteinExistence type="inferred from homology"/>
<name>EFG_THEAB</name>
<keyword id="KW-0963">Cytoplasm</keyword>
<keyword id="KW-0251">Elongation factor</keyword>
<keyword id="KW-0342">GTP-binding</keyword>
<keyword id="KW-0547">Nucleotide-binding</keyword>
<keyword id="KW-0648">Protein biosynthesis</keyword>
<keyword id="KW-1185">Reference proteome</keyword>
<reference key="1">
    <citation type="journal article" date="2009" name="J. Bacteriol.">
        <title>The genome of Thermosipho africanus TCF52B: lateral genetic connections to the Firmicutes and Archaea.</title>
        <authorList>
            <person name="Nesboe C.L."/>
            <person name="Bapteste E."/>
            <person name="Curtis B."/>
            <person name="Dahle H."/>
            <person name="Lopez P."/>
            <person name="Macleod D."/>
            <person name="Dlutek M."/>
            <person name="Bowman S."/>
            <person name="Zhaxybayeva O."/>
            <person name="Birkeland N.-K."/>
            <person name="Doolittle W.F."/>
        </authorList>
    </citation>
    <scope>NUCLEOTIDE SEQUENCE [LARGE SCALE GENOMIC DNA]</scope>
    <source>
        <strain>TCF52B</strain>
    </source>
</reference>
<protein>
    <recommendedName>
        <fullName evidence="1">Elongation factor G</fullName>
        <shortName evidence="1">EF-G</shortName>
    </recommendedName>
</protein>
<dbReference type="EMBL" id="CP001185">
    <property type="protein sequence ID" value="ACJ75657.1"/>
    <property type="molecule type" value="Genomic_DNA"/>
</dbReference>
<dbReference type="RefSeq" id="WP_004101432.1">
    <property type="nucleotide sequence ID" value="NC_011653.1"/>
</dbReference>
<dbReference type="SMR" id="B7IHU3"/>
<dbReference type="STRING" id="484019.THA_1212"/>
<dbReference type="KEGG" id="taf:THA_1212"/>
<dbReference type="eggNOG" id="COG0480">
    <property type="taxonomic scope" value="Bacteria"/>
</dbReference>
<dbReference type="HOGENOM" id="CLU_002794_4_1_0"/>
<dbReference type="OrthoDB" id="9804431at2"/>
<dbReference type="Proteomes" id="UP000002453">
    <property type="component" value="Chromosome"/>
</dbReference>
<dbReference type="GO" id="GO:0005737">
    <property type="term" value="C:cytoplasm"/>
    <property type="evidence" value="ECO:0007669"/>
    <property type="project" value="UniProtKB-SubCell"/>
</dbReference>
<dbReference type="GO" id="GO:0005525">
    <property type="term" value="F:GTP binding"/>
    <property type="evidence" value="ECO:0007669"/>
    <property type="project" value="UniProtKB-UniRule"/>
</dbReference>
<dbReference type="GO" id="GO:0003924">
    <property type="term" value="F:GTPase activity"/>
    <property type="evidence" value="ECO:0007669"/>
    <property type="project" value="InterPro"/>
</dbReference>
<dbReference type="GO" id="GO:0003746">
    <property type="term" value="F:translation elongation factor activity"/>
    <property type="evidence" value="ECO:0007669"/>
    <property type="project" value="UniProtKB-UniRule"/>
</dbReference>
<dbReference type="GO" id="GO:0032790">
    <property type="term" value="P:ribosome disassembly"/>
    <property type="evidence" value="ECO:0007669"/>
    <property type="project" value="TreeGrafter"/>
</dbReference>
<dbReference type="CDD" id="cd01886">
    <property type="entry name" value="EF-G"/>
    <property type="match status" value="1"/>
</dbReference>
<dbReference type="CDD" id="cd16262">
    <property type="entry name" value="EFG_III"/>
    <property type="match status" value="1"/>
</dbReference>
<dbReference type="CDD" id="cd01434">
    <property type="entry name" value="EFG_mtEFG1_IV"/>
    <property type="match status" value="1"/>
</dbReference>
<dbReference type="CDD" id="cd03713">
    <property type="entry name" value="EFG_mtEFG_C"/>
    <property type="match status" value="1"/>
</dbReference>
<dbReference type="CDD" id="cd04088">
    <property type="entry name" value="EFG_mtEFG_II"/>
    <property type="match status" value="1"/>
</dbReference>
<dbReference type="FunFam" id="2.40.30.10:FF:000006">
    <property type="entry name" value="Elongation factor G"/>
    <property type="match status" value="1"/>
</dbReference>
<dbReference type="FunFam" id="3.30.230.10:FF:000003">
    <property type="entry name" value="Elongation factor G"/>
    <property type="match status" value="1"/>
</dbReference>
<dbReference type="FunFam" id="3.30.70.240:FF:000001">
    <property type="entry name" value="Elongation factor G"/>
    <property type="match status" value="1"/>
</dbReference>
<dbReference type="FunFam" id="3.30.70.870:FF:000001">
    <property type="entry name" value="Elongation factor G"/>
    <property type="match status" value="1"/>
</dbReference>
<dbReference type="FunFam" id="3.40.50.300:FF:000029">
    <property type="entry name" value="Elongation factor G"/>
    <property type="match status" value="1"/>
</dbReference>
<dbReference type="Gene3D" id="3.30.230.10">
    <property type="match status" value="1"/>
</dbReference>
<dbReference type="Gene3D" id="3.30.70.240">
    <property type="match status" value="1"/>
</dbReference>
<dbReference type="Gene3D" id="3.30.70.870">
    <property type="entry name" value="Elongation Factor G (Translational Gtpase), domain 3"/>
    <property type="match status" value="1"/>
</dbReference>
<dbReference type="Gene3D" id="3.40.50.300">
    <property type="entry name" value="P-loop containing nucleotide triphosphate hydrolases"/>
    <property type="match status" value="1"/>
</dbReference>
<dbReference type="Gene3D" id="2.40.30.10">
    <property type="entry name" value="Translation factors"/>
    <property type="match status" value="1"/>
</dbReference>
<dbReference type="HAMAP" id="MF_00054_B">
    <property type="entry name" value="EF_G_EF_2_B"/>
    <property type="match status" value="1"/>
</dbReference>
<dbReference type="InterPro" id="IPR041095">
    <property type="entry name" value="EFG_II"/>
</dbReference>
<dbReference type="InterPro" id="IPR009022">
    <property type="entry name" value="EFG_III"/>
</dbReference>
<dbReference type="InterPro" id="IPR035647">
    <property type="entry name" value="EFG_III/V"/>
</dbReference>
<dbReference type="InterPro" id="IPR047872">
    <property type="entry name" value="EFG_IV"/>
</dbReference>
<dbReference type="InterPro" id="IPR035649">
    <property type="entry name" value="EFG_V"/>
</dbReference>
<dbReference type="InterPro" id="IPR000640">
    <property type="entry name" value="EFG_V-like"/>
</dbReference>
<dbReference type="InterPro" id="IPR004161">
    <property type="entry name" value="EFTu-like_2"/>
</dbReference>
<dbReference type="InterPro" id="IPR031157">
    <property type="entry name" value="G_TR_CS"/>
</dbReference>
<dbReference type="InterPro" id="IPR027417">
    <property type="entry name" value="P-loop_NTPase"/>
</dbReference>
<dbReference type="InterPro" id="IPR020568">
    <property type="entry name" value="Ribosomal_Su5_D2-typ_SF"/>
</dbReference>
<dbReference type="InterPro" id="IPR014721">
    <property type="entry name" value="Ribsml_uS5_D2-typ_fold_subgr"/>
</dbReference>
<dbReference type="InterPro" id="IPR005225">
    <property type="entry name" value="Small_GTP-bd"/>
</dbReference>
<dbReference type="InterPro" id="IPR000795">
    <property type="entry name" value="T_Tr_GTP-bd_dom"/>
</dbReference>
<dbReference type="InterPro" id="IPR009000">
    <property type="entry name" value="Transl_B-barrel_sf"/>
</dbReference>
<dbReference type="InterPro" id="IPR004540">
    <property type="entry name" value="Transl_elong_EFG/EF2"/>
</dbReference>
<dbReference type="InterPro" id="IPR005517">
    <property type="entry name" value="Transl_elong_EFG/EF2_IV"/>
</dbReference>
<dbReference type="NCBIfam" id="TIGR00484">
    <property type="entry name" value="EF-G"/>
    <property type="match status" value="1"/>
</dbReference>
<dbReference type="NCBIfam" id="NF009379">
    <property type="entry name" value="PRK12740.1-3"/>
    <property type="match status" value="1"/>
</dbReference>
<dbReference type="NCBIfam" id="NF009381">
    <property type="entry name" value="PRK12740.1-5"/>
    <property type="match status" value="1"/>
</dbReference>
<dbReference type="NCBIfam" id="TIGR00231">
    <property type="entry name" value="small_GTP"/>
    <property type="match status" value="1"/>
</dbReference>
<dbReference type="PANTHER" id="PTHR43261:SF1">
    <property type="entry name" value="RIBOSOME-RELEASING FACTOR 2, MITOCHONDRIAL"/>
    <property type="match status" value="1"/>
</dbReference>
<dbReference type="PANTHER" id="PTHR43261">
    <property type="entry name" value="TRANSLATION ELONGATION FACTOR G-RELATED"/>
    <property type="match status" value="1"/>
</dbReference>
<dbReference type="Pfam" id="PF00679">
    <property type="entry name" value="EFG_C"/>
    <property type="match status" value="1"/>
</dbReference>
<dbReference type="Pfam" id="PF14492">
    <property type="entry name" value="EFG_III"/>
    <property type="match status" value="1"/>
</dbReference>
<dbReference type="Pfam" id="PF03764">
    <property type="entry name" value="EFG_IV"/>
    <property type="match status" value="1"/>
</dbReference>
<dbReference type="Pfam" id="PF00009">
    <property type="entry name" value="GTP_EFTU"/>
    <property type="match status" value="1"/>
</dbReference>
<dbReference type="Pfam" id="PF03144">
    <property type="entry name" value="GTP_EFTU_D2"/>
    <property type="match status" value="1"/>
</dbReference>
<dbReference type="PRINTS" id="PR00315">
    <property type="entry name" value="ELONGATNFCT"/>
</dbReference>
<dbReference type="SMART" id="SM00838">
    <property type="entry name" value="EFG_C"/>
    <property type="match status" value="1"/>
</dbReference>
<dbReference type="SMART" id="SM00889">
    <property type="entry name" value="EFG_IV"/>
    <property type="match status" value="1"/>
</dbReference>
<dbReference type="SUPFAM" id="SSF54980">
    <property type="entry name" value="EF-G C-terminal domain-like"/>
    <property type="match status" value="2"/>
</dbReference>
<dbReference type="SUPFAM" id="SSF52540">
    <property type="entry name" value="P-loop containing nucleoside triphosphate hydrolases"/>
    <property type="match status" value="1"/>
</dbReference>
<dbReference type="SUPFAM" id="SSF54211">
    <property type="entry name" value="Ribosomal protein S5 domain 2-like"/>
    <property type="match status" value="1"/>
</dbReference>
<dbReference type="SUPFAM" id="SSF50447">
    <property type="entry name" value="Translation proteins"/>
    <property type="match status" value="1"/>
</dbReference>
<dbReference type="PROSITE" id="PS00301">
    <property type="entry name" value="G_TR_1"/>
    <property type="match status" value="1"/>
</dbReference>
<dbReference type="PROSITE" id="PS51722">
    <property type="entry name" value="G_TR_2"/>
    <property type="match status" value="1"/>
</dbReference>
<sequence length="691" mass="77819">MKEIQAIYVDLKKLRNIGIMAHIDAGKTTTTERILFYTGRKHNIGSVDDGTATMDWMVQEKERGITIVSAATTCMWKDHRINIIDTPGHVDFTIEVERALRVLDGAVAVFDAAAGVEPQSETVWRQADKYNVPRIAFMNKMDKLGADFEMAVQTMVDRLKANPIPVQMPMGAEDSFEGVIDLIEMKAIRWLNENGTEMVYEEIPEKYRAKAEEMREDLLEKVAELDDEIMMLYLEGEEISNDLIKKALRKATIENKATPVFCGSAKMNRGVQPLLDGILEYLPSPLDMPPVRGWNQNGEEVQIKPSEDEPFTALAFKIQADPYVGKLTFFRVYSGRLEKGSYVYNSTKGKKERISRLIFMHADKREDVEYVRAGDIVAAIGLKDTKTGDTLCDEKRPVILEKMEFPEPVISIAIEPETKNDQDKLSKALTLLSDEDPSFRAYVDHETGETIISGMGELHLEIIVDRLKREFNTKVRVGQPQVAYRETIQEPAEAEGKYIRQSGGRGQYGHVIMRFEPIDLSKTFEFEDRIVGGVIPKEYIPAVEEGVREAAQSGVLAGYPMVGIKAILLDGSYHEVDSSEMAFKIAASMAFKEAVKKAKPILLEPIMRVEVTTPEEYMGNIIADLNSRRAHVETLESRGHLRIIKALVPLSEMFGYATDLRSLSQGRATYTMVLERYAKVPDKLAEKIISK</sequence>
<evidence type="ECO:0000255" key="1">
    <source>
        <dbReference type="HAMAP-Rule" id="MF_00054"/>
    </source>
</evidence>
<accession>B7IHU3</accession>
<organism>
    <name type="scientific">Thermosipho africanus (strain TCF52B)</name>
    <dbReference type="NCBI Taxonomy" id="484019"/>
    <lineage>
        <taxon>Bacteria</taxon>
        <taxon>Thermotogati</taxon>
        <taxon>Thermotogota</taxon>
        <taxon>Thermotogae</taxon>
        <taxon>Thermotogales</taxon>
        <taxon>Fervidobacteriaceae</taxon>
        <taxon>Thermosipho</taxon>
    </lineage>
</organism>